<protein>
    <recommendedName>
        <fullName>Beta-galactosidase bgaB</fullName>
        <shortName>Beta-gal</shortName>
        <ecNumber>3.2.1.23</ecNumber>
    </recommendedName>
    <alternativeName>
        <fullName>Beta-galactosidase I</fullName>
    </alternativeName>
    <alternativeName>
        <fullName>Lactase</fullName>
    </alternativeName>
</protein>
<proteinExistence type="evidence at protein level"/>
<keyword id="KW-0903">Direct protein sequencing</keyword>
<keyword id="KW-0326">Glycosidase</keyword>
<keyword id="KW-0378">Hydrolase</keyword>
<keyword id="KW-0479">Metal-binding</keyword>
<keyword id="KW-0862">Zinc</keyword>
<accession>P19668</accession>
<dbReference type="EC" id="3.2.1.23"/>
<dbReference type="EMBL" id="M13466">
    <property type="protein sequence ID" value="AAA22262.1"/>
    <property type="molecule type" value="Genomic_DNA"/>
</dbReference>
<dbReference type="PIR" id="A29836">
    <property type="entry name" value="A29836"/>
</dbReference>
<dbReference type="SMR" id="P19668"/>
<dbReference type="CAZy" id="GH42">
    <property type="family name" value="Glycoside Hydrolase Family 42"/>
</dbReference>
<dbReference type="GO" id="GO:0009341">
    <property type="term" value="C:beta-galactosidase complex"/>
    <property type="evidence" value="ECO:0007669"/>
    <property type="project" value="InterPro"/>
</dbReference>
<dbReference type="GO" id="GO:0004565">
    <property type="term" value="F:beta-galactosidase activity"/>
    <property type="evidence" value="ECO:0007669"/>
    <property type="project" value="UniProtKB-EC"/>
</dbReference>
<dbReference type="GO" id="GO:0046872">
    <property type="term" value="F:metal ion binding"/>
    <property type="evidence" value="ECO:0007669"/>
    <property type="project" value="UniProtKB-KW"/>
</dbReference>
<dbReference type="GO" id="GO:0006012">
    <property type="term" value="P:galactose metabolic process"/>
    <property type="evidence" value="ECO:0007669"/>
    <property type="project" value="InterPro"/>
</dbReference>
<dbReference type="CDD" id="cd03143">
    <property type="entry name" value="A4_beta-galactosidase_middle_domain"/>
    <property type="match status" value="1"/>
</dbReference>
<dbReference type="Gene3D" id="3.40.50.880">
    <property type="match status" value="1"/>
</dbReference>
<dbReference type="Gene3D" id="3.20.20.80">
    <property type="entry name" value="Glycosidases"/>
    <property type="match status" value="1"/>
</dbReference>
<dbReference type="Gene3D" id="2.60.40.1180">
    <property type="entry name" value="Golgi alpha-mannosidase II"/>
    <property type="match status" value="1"/>
</dbReference>
<dbReference type="InterPro" id="IPR013739">
    <property type="entry name" value="Beta_galactosidase_C"/>
</dbReference>
<dbReference type="InterPro" id="IPR013738">
    <property type="entry name" value="Beta_galactosidase_Trimer"/>
</dbReference>
<dbReference type="InterPro" id="IPR029062">
    <property type="entry name" value="Class_I_gatase-like"/>
</dbReference>
<dbReference type="InterPro" id="IPR003476">
    <property type="entry name" value="Glyco_hydro_42"/>
</dbReference>
<dbReference type="InterPro" id="IPR013529">
    <property type="entry name" value="Glyco_hydro_42_N"/>
</dbReference>
<dbReference type="InterPro" id="IPR013780">
    <property type="entry name" value="Glyco_hydro_b"/>
</dbReference>
<dbReference type="InterPro" id="IPR017853">
    <property type="entry name" value="Glycoside_hydrolase_SF"/>
</dbReference>
<dbReference type="PANTHER" id="PTHR36447">
    <property type="entry name" value="BETA-GALACTOSIDASE GANA"/>
    <property type="match status" value="1"/>
</dbReference>
<dbReference type="PANTHER" id="PTHR36447:SF1">
    <property type="entry name" value="BETA-GALACTOSIDASE GANA"/>
    <property type="match status" value="1"/>
</dbReference>
<dbReference type="Pfam" id="PF02449">
    <property type="entry name" value="Glyco_hydro_42"/>
    <property type="match status" value="1"/>
</dbReference>
<dbReference type="Pfam" id="PF08533">
    <property type="entry name" value="Glyco_hydro_42C"/>
    <property type="match status" value="1"/>
</dbReference>
<dbReference type="Pfam" id="PF08532">
    <property type="entry name" value="Glyco_hydro_42M"/>
    <property type="match status" value="1"/>
</dbReference>
<dbReference type="PIRSF" id="PIRSF001084">
    <property type="entry name" value="B-galactosidase"/>
    <property type="match status" value="1"/>
</dbReference>
<dbReference type="SUPFAM" id="SSF51445">
    <property type="entry name" value="(Trans)glycosidases"/>
    <property type="match status" value="1"/>
</dbReference>
<dbReference type="SUPFAM" id="SSF52317">
    <property type="entry name" value="Class I glutamine amidotransferase-like"/>
    <property type="match status" value="1"/>
</dbReference>
<feature type="chain" id="PRO_0000057691" description="Beta-galactosidase bgaB">
    <location>
        <begin position="1"/>
        <end position="672"/>
    </location>
</feature>
<feature type="active site" description="Proton donor" evidence="1">
    <location>
        <position position="148"/>
    </location>
</feature>
<feature type="active site" description="Nucleophile" evidence="1">
    <location>
        <position position="303"/>
    </location>
</feature>
<feature type="binding site" evidence="1">
    <location>
        <position position="109"/>
    </location>
    <ligand>
        <name>substrate</name>
    </ligand>
</feature>
<feature type="binding site" evidence="1">
    <location>
        <position position="113"/>
    </location>
    <ligand>
        <name>Zn(2+)</name>
        <dbReference type="ChEBI" id="CHEBI:29105"/>
    </ligand>
</feature>
<feature type="binding site" evidence="1">
    <location>
        <position position="147"/>
    </location>
    <ligand>
        <name>substrate</name>
    </ligand>
</feature>
<feature type="binding site" evidence="1">
    <location>
        <position position="156"/>
    </location>
    <ligand>
        <name>Zn(2+)</name>
        <dbReference type="ChEBI" id="CHEBI:29105"/>
    </ligand>
</feature>
<feature type="binding site" evidence="1">
    <location>
        <position position="158"/>
    </location>
    <ligand>
        <name>Zn(2+)</name>
        <dbReference type="ChEBI" id="CHEBI:29105"/>
    </ligand>
</feature>
<feature type="binding site" evidence="1">
    <location>
        <position position="161"/>
    </location>
    <ligand>
        <name>Zn(2+)</name>
        <dbReference type="ChEBI" id="CHEBI:29105"/>
    </ligand>
</feature>
<feature type="binding site" evidence="1">
    <location>
        <position position="311"/>
    </location>
    <ligand>
        <name>substrate</name>
    </ligand>
</feature>
<feature type="binding site">
    <location>
        <begin position="351"/>
        <end position="354"/>
    </location>
    <ligand>
        <name>substrate</name>
    </ligand>
</feature>
<reference key="1">
    <citation type="journal article" date="1986" name="J. Bacteriol.">
        <title>Structure of a beta-galactosidase gene of Bacillus stearothermophilus.</title>
        <authorList>
            <person name="Hirata H."/>
            <person name="Fukazawa T."/>
            <person name="Negoro S."/>
            <person name="Okada H."/>
        </authorList>
    </citation>
    <scope>NUCLEOTIDE SEQUENCE [GENOMIC DNA]</scope>
    <scope>PROTEIN SEQUENCE OF 1-14</scope>
    <scope>BIOPHYSICOCHEMICAL PROPERTIES</scope>
    <source>
        <strain>ATCC 8005 / DSM 7263 / JCM 20319 / NBRC 102445 / NCIMB 8547 / NRRL NRS-81 / IAM 11001 / BD53</strain>
    </source>
</reference>
<reference key="2">
    <citation type="journal article" date="1984" name="J. Bacteriol.">
        <title>Molecular basis of isozyme formation of beta-galactosidases in Bacillus stearothermophilus: isolation of two beta-galactosidase genes, bgaA and bgaB.</title>
        <authorList>
            <person name="Hirata H."/>
            <person name="Negoro S."/>
            <person name="Okada H."/>
        </authorList>
    </citation>
    <scope>CATALYTIC ACTIVITY</scope>
    <source>
        <strain>ATCC 8005 / DSM 7263 / JCM 20319 / NBRC 102445 / NCIMB 8547 / NRRL NRS-81 / IAM 11001 / BD53</strain>
    </source>
</reference>
<reference key="3">
    <citation type="journal article" date="2008" name="J. Dairy Sci.">
        <title>Production, purification, and characterization of a potential thermostable galactosidase for milk lactose hydrolysis from Bacillus stearothermophilus.</title>
        <authorList>
            <person name="Chen W."/>
            <person name="Chen H."/>
            <person name="Xia Y."/>
            <person name="Zhao J."/>
            <person name="Tian F."/>
            <person name="Zhang H."/>
        </authorList>
    </citation>
    <scope>FUNCTION</scope>
    <scope>CATALYTIC ACTIVITY</scope>
    <scope>BIOPHYSICOCHEMICAL PROPERTIES</scope>
    <scope>ACTIVITY REGULATION</scope>
    <scope>BIOTECHNOLOGY</scope>
    <source>
        <strain>ATCC 8005 / DSM 7263 / JCM 20319 / NBRC 102445 / NCIMB 8547 / NRRL NRS-81 / IAM 11001 / BD53</strain>
    </source>
</reference>
<gene>
    <name type="primary">bgaB</name>
</gene>
<name>BGAL_GEOKU</name>
<organism>
    <name type="scientific">Geobacillus kaustophilus</name>
    <dbReference type="NCBI Taxonomy" id="1462"/>
    <lineage>
        <taxon>Bacteria</taxon>
        <taxon>Bacillati</taxon>
        <taxon>Bacillota</taxon>
        <taxon>Bacilli</taxon>
        <taxon>Bacillales</taxon>
        <taxon>Anoxybacillaceae</taxon>
        <taxon>Geobacillus</taxon>
        <taxon>Geobacillus thermoleovorans group</taxon>
    </lineage>
</organism>
<evidence type="ECO:0000250" key="1"/>
<evidence type="ECO:0000269" key="2">
    <source>
    </source>
</evidence>
<evidence type="ECO:0000269" key="3">
    <source>
    </source>
</evidence>
<evidence type="ECO:0000269" key="4">
    <source>
    </source>
</evidence>
<evidence type="ECO:0000305" key="5"/>
<sequence length="672" mass="78053">MNVLSSICYGGDYNPEQWPEEIWYEDAKLMQKAGVNLVSLGIFSWSKIEPSDGVFDFEWLDKVIDILYDHGVYINLGTATATTPAWFVKKYPDSLPIDESGVILSFGSRQHYCPNHPQLITHIKRLVRAIAERYKNHPALKMWHVNNEYACHVSKCFCENCAVAFRKWLKERYKTIDELNERWGTNFWGQRYNHWDEINPPRKAPTFINPSQELDYYRFMNDSILKLFLTEKEILREVTPDIPVSTNFMGSFKPLNYFQWAQHVDIVTWDSYPDPREGLPIQHAMMNDLMRSLRKGQPFILMEQVTSHVNWRDINVPKPPGVMRLWSYATIARGADGIMFFQWRQSRAGAEKFHGAMVPHFLNENNRIYREVTQLGQELKKLDCLVGSRIKAEVAIIFDWENWWAVELSSKPHNKLRYIPIVEAYYRELYKRNIAVDFVRPSDDLTKYKVVIAPMLYMVKEGEDENLRQFVANGGTLIVSFFSGIVDENDRVHLGGYPGPLRDILGIFVEEFVPYPETKVNKIYSNDGEYDCTTWADIIRLEGAEPLATFKGDWYAGLPAVTRNCYGKGEGIYVGTYPDSNYLGRLLEQVFAKHHINPILEVAENVEVQQRETDEWKYLIIINHNDYEVTLSLPEDKIYQNMIDGKCFRGGELRIQGVDVAVLREHDEAGKV</sequence>
<comment type="function">
    <text evidence="2">Hydrolyzes 6-bromo-2-naphthyl-beta-D-galactopyranoside and o-nitrophenyl-beta-D-galactopyranoside (ONPG). Possesses a high level of transgalactosylation activity. Hydrolyzes lactose in milk.</text>
</comment>
<comment type="catalytic activity">
    <reaction evidence="2 4">
        <text>Hydrolysis of terminal non-reducing beta-D-galactose residues in beta-D-galactosides.</text>
        <dbReference type="EC" id="3.2.1.23"/>
    </reaction>
</comment>
<comment type="activity regulation">
    <text evidence="2">By divalent metal ions. Fe(2+), Zn(2+), Cu(2+), Pb(2+) and Sn(2+) inhibit 52, 76.6, 85.3, 100 and 100% of the enzyme activity, respectively. Other metal cations and EDTA do not inhibit this enzyme. Thiol reagents 2-mercaptoethanol and dithiothreitol have no effect on the activity. Sulfhydryl group-blocking reagents p-chloromercuribenzoic acid and iodoacetic acid inhibit 86.2 and 74% of the enzyme activity, respectively.</text>
</comment>
<comment type="biophysicochemical properties">
    <kinetics>
        <KM evidence="2 3">2.96 mM for ONPG (at 55 degrees Celsius and pH 7.0)</KM>
        <Vmax evidence="2 3">6.62 umol/min/mg enzyme with ONPG as substrate (at 55 degrees Celsius and pH 7.0)</Vmax>
    </kinetics>
    <phDependence>
        <text evidence="2 3">Optimum pH is 7.0. Retains more than 80% of the activity at a pH range of 6.0-7.5.</text>
    </phDependence>
    <temperatureDependence>
        <text evidence="2 3">Optimum temperature for the activity is 70 degrees Celsius using ONPG as substrate. Stable up to 70 degrees Celsius (PubMed:3086288). Retains 80% of the activity at 75 degrees Celsius (PubMed:18420605). Kinetics of thermal inactivation and half-life times at 60, 65 and 70 degrees Celsius are 120, 50 and 9 hours, respectively.</text>
    </temperatureDependence>
</comment>
<comment type="biotechnology">
    <text evidence="2">Has potential for enzyme application in low-lactose milk production during milk pasteurization.</text>
</comment>
<comment type="similarity">
    <text evidence="5">Belongs to the glycosyl hydrolase 42 family.</text>
</comment>